<protein>
    <recommendedName>
        <fullName>Cytochrome c-type biogenesis protein ccl1</fullName>
    </recommendedName>
</protein>
<dbReference type="EMBL" id="X63461">
    <property type="protein sequence ID" value="CAA45058.1"/>
    <property type="molecule type" value="Genomic_DNA"/>
</dbReference>
<dbReference type="EMBL" id="CP001312">
    <property type="protein sequence ID" value="ADE86860.1"/>
    <property type="molecule type" value="Genomic_DNA"/>
</dbReference>
<dbReference type="PIR" id="S23667">
    <property type="entry name" value="S23667"/>
</dbReference>
<dbReference type="RefSeq" id="WP_013068833.1">
    <property type="nucleotide sequence ID" value="NC_014034.1"/>
</dbReference>
<dbReference type="SMR" id="Q00500"/>
<dbReference type="STRING" id="272942.RCAP_rcc03136"/>
<dbReference type="TCDB" id="9.B.14.1.1">
    <property type="family name" value="the putative heme handling protein (hhp) family"/>
</dbReference>
<dbReference type="GeneID" id="31491923"/>
<dbReference type="KEGG" id="rcp:RCAP_rcc03136"/>
<dbReference type="eggNOG" id="COG1138">
    <property type="taxonomic scope" value="Bacteria"/>
</dbReference>
<dbReference type="HOGENOM" id="CLU_015041_3_0_5"/>
<dbReference type="OrthoDB" id="9761451at2"/>
<dbReference type="Proteomes" id="UP000002361">
    <property type="component" value="Chromosome"/>
</dbReference>
<dbReference type="GO" id="GO:0005886">
    <property type="term" value="C:plasma membrane"/>
    <property type="evidence" value="ECO:0007669"/>
    <property type="project" value="UniProtKB-SubCell"/>
</dbReference>
<dbReference type="GO" id="GO:0020037">
    <property type="term" value="F:heme binding"/>
    <property type="evidence" value="ECO:0007669"/>
    <property type="project" value="InterPro"/>
</dbReference>
<dbReference type="GO" id="GO:0015232">
    <property type="term" value="F:heme transmembrane transporter activity"/>
    <property type="evidence" value="ECO:0007669"/>
    <property type="project" value="InterPro"/>
</dbReference>
<dbReference type="GO" id="GO:0017004">
    <property type="term" value="P:cytochrome complex assembly"/>
    <property type="evidence" value="ECO:0007669"/>
    <property type="project" value="UniProtKB-KW"/>
</dbReference>
<dbReference type="InterPro" id="IPR032523">
    <property type="entry name" value="CcmF_C"/>
</dbReference>
<dbReference type="InterPro" id="IPR002541">
    <property type="entry name" value="Cyt_c_assembly"/>
</dbReference>
<dbReference type="InterPro" id="IPR003567">
    <property type="entry name" value="Cyt_c_biogenesis"/>
</dbReference>
<dbReference type="InterPro" id="IPR003568">
    <property type="entry name" value="Cyt_c_biogenesis_CcmF"/>
</dbReference>
<dbReference type="NCBIfam" id="TIGR00353">
    <property type="entry name" value="nrfE"/>
    <property type="match status" value="1"/>
</dbReference>
<dbReference type="NCBIfam" id="NF007691">
    <property type="entry name" value="PRK10369.1"/>
    <property type="match status" value="1"/>
</dbReference>
<dbReference type="PANTHER" id="PTHR43653">
    <property type="entry name" value="CYTOCHROME C ASSEMBLY PROTEIN-RELATED"/>
    <property type="match status" value="1"/>
</dbReference>
<dbReference type="PANTHER" id="PTHR43653:SF1">
    <property type="entry name" value="CYTOCHROME C-TYPE BIOGENESIS PROTEIN CCMF"/>
    <property type="match status" value="1"/>
</dbReference>
<dbReference type="Pfam" id="PF16327">
    <property type="entry name" value="CcmF_C"/>
    <property type="match status" value="1"/>
</dbReference>
<dbReference type="Pfam" id="PF01578">
    <property type="entry name" value="Cytochrom_C_asm"/>
    <property type="match status" value="1"/>
</dbReference>
<dbReference type="PRINTS" id="PR01410">
    <property type="entry name" value="CCBIOGENESIS"/>
</dbReference>
<dbReference type="PRINTS" id="PR01411">
    <property type="entry name" value="CCMFBIOGNSIS"/>
</dbReference>
<reference key="1">
    <citation type="journal article" date="1992" name="Genes Dev.">
        <title>Bacterial cytochromes c biogenesis.</title>
        <authorList>
            <person name="Beckman D.L."/>
            <person name="Trawick D.R."/>
            <person name="Kranz R.G."/>
        </authorList>
    </citation>
    <scope>NUCLEOTIDE SEQUENCE [GENOMIC DNA]</scope>
    <source>
        <strain>ATCC BAA-309 / NBRC 16581 / SB1003</strain>
    </source>
</reference>
<reference key="2">
    <citation type="journal article" date="2010" name="J. Bacteriol.">
        <title>Complete genome sequence of the photosynthetic purple nonsulfur bacterium Rhodobacter capsulatus SB 1003.</title>
        <authorList>
            <person name="Strnad H."/>
            <person name="Lapidus A."/>
            <person name="Paces J."/>
            <person name="Ulbrich P."/>
            <person name="Vlcek C."/>
            <person name="Paces V."/>
            <person name="Haselkorn R."/>
        </authorList>
    </citation>
    <scope>NUCLEOTIDE SEQUENCE [LARGE SCALE GENOMIC DNA]</scope>
    <source>
        <strain>ATCC BAA-309 / NBRC 16581 / SB1003</strain>
    </source>
</reference>
<accession>Q00500</accession>
<accession>D5AR55</accession>
<comment type="function">
    <text>Required for the biogenesis of c-type cytochromes. Possible subunit of a heme lyase.</text>
</comment>
<comment type="subcellular location">
    <subcellularLocation>
        <location evidence="2">Cell inner membrane</location>
        <topology evidence="2">Multi-pass membrane protein</topology>
    </subcellularLocation>
</comment>
<comment type="similarity">
    <text evidence="2">Belongs to the CcmF/CycK/Ccl1/NrfE/CcsA family.</text>
</comment>
<name>CCMF_RHOCB</name>
<evidence type="ECO:0000255" key="1"/>
<evidence type="ECO:0000305" key="2"/>
<keyword id="KW-0997">Cell inner membrane</keyword>
<keyword id="KW-1003">Cell membrane</keyword>
<keyword id="KW-0201">Cytochrome c-type biogenesis</keyword>
<keyword id="KW-0472">Membrane</keyword>
<keyword id="KW-1185">Reference proteome</keyword>
<keyword id="KW-0812">Transmembrane</keyword>
<keyword id="KW-1133">Transmembrane helix</keyword>
<organism>
    <name type="scientific">Rhodobacter capsulatus (strain ATCC BAA-309 / NBRC 16581 / SB1003)</name>
    <dbReference type="NCBI Taxonomy" id="272942"/>
    <lineage>
        <taxon>Bacteria</taxon>
        <taxon>Pseudomonadati</taxon>
        <taxon>Pseudomonadota</taxon>
        <taxon>Alphaproteobacteria</taxon>
        <taxon>Rhodobacterales</taxon>
        <taxon>Rhodobacter group</taxon>
        <taxon>Rhodobacter</taxon>
    </lineage>
</organism>
<feature type="chain" id="PRO_0000201588" description="Cytochrome c-type biogenesis protein ccl1">
    <location>
        <begin position="1"/>
        <end position="653"/>
    </location>
</feature>
<feature type="transmembrane region" description="Helical" evidence="1">
    <location>
        <begin position="8"/>
        <end position="28"/>
    </location>
</feature>
<feature type="transmembrane region" description="Helical" evidence="1">
    <location>
        <begin position="42"/>
        <end position="62"/>
    </location>
</feature>
<feature type="transmembrane region" description="Helical" evidence="1">
    <location>
        <begin position="97"/>
        <end position="117"/>
    </location>
</feature>
<feature type="transmembrane region" description="Helical" evidence="1">
    <location>
        <begin position="125"/>
        <end position="145"/>
    </location>
</feature>
<feature type="transmembrane region" description="Helical" evidence="1">
    <location>
        <begin position="175"/>
        <end position="195"/>
    </location>
</feature>
<feature type="transmembrane region" description="Helical" evidence="1">
    <location>
        <begin position="210"/>
        <end position="230"/>
    </location>
</feature>
<feature type="transmembrane region" description="Helical" evidence="1">
    <location>
        <begin position="245"/>
        <end position="265"/>
    </location>
</feature>
<feature type="transmembrane region" description="Helical" evidence="1">
    <location>
        <begin position="273"/>
        <end position="293"/>
    </location>
</feature>
<feature type="transmembrane region" description="Helical" evidence="1">
    <location>
        <begin position="311"/>
        <end position="331"/>
    </location>
</feature>
<feature type="transmembrane region" description="Helical" evidence="1">
    <location>
        <begin position="358"/>
        <end position="378"/>
    </location>
</feature>
<feature type="transmembrane region" description="Helical" evidence="1">
    <location>
        <begin position="393"/>
        <end position="413"/>
    </location>
</feature>
<feature type="transmembrane region" description="Helical" evidence="1">
    <location>
        <begin position="425"/>
        <end position="445"/>
    </location>
</feature>
<feature type="transmembrane region" description="Helical" evidence="1">
    <location>
        <begin position="449"/>
        <end position="469"/>
    </location>
</feature>
<feature type="transmembrane region" description="Helical" evidence="1">
    <location>
        <begin position="491"/>
        <end position="511"/>
    </location>
</feature>
<feature type="transmembrane region" description="Helical" evidence="1">
    <location>
        <begin position="610"/>
        <end position="630"/>
    </location>
</feature>
<sequence length="653" mass="70552">MIVETGHFALILALCVALVQAVIPLVGAQKGWSGWMAVATPAALAQFGLIAIAFAALTYAFVTSDFSLKLVYENSHTDKPMLYKVTGVWGNHEGSMLLWVLILAMFGAAAAAFGGALPERLRARVLAVQGTIGVAFLVFVLFTSNPFLRLEEAPFNGRDMNPLLQDPGLAFHPPFLYLGYVGLSMAFSFAVAALIEGRVDAAWARWVRPWTLAAWIFLTIGIALGSWWAYYELGWGGFWFWDPVENASLMPWLLAAALLHSAIVVEKREALKSWTILLAIMAFGFSLIGTFLVRSGVISSVHSFANDPERGVFILFILAFFTGGALTLYAARASEMQAKGLFSMVSRESALVMNNVLLAVAALVVFTGTVWPLIAELFWDRKLSVGAPFFEKAFTPFMVGLALLLPLGSMMPWKRASLGKLVRPLLPALVLTLAVLALVWVMATGRPMLALGAAGLGAWILFGALAEIWQRAGRTPGRILRLPRADWGKAFAHGGLGIVFAGVGLLMAGQVEDIRVAKAGDSFEVAGYTITLVSVEDVPGPNFTAKTATMEVRQGGKLVATLHPEKRIYPVQAMPTTEADIDNGFWRDVYLVIGDPQEGGGWAVRTYVKPFANWIWAGCLLMAFGGGLSLTDRRYRSAAGARRATVADAVAAE</sequence>
<proteinExistence type="inferred from homology"/>
<gene>
    <name type="primary">ccl1</name>
    <name type="synonym">ccmF</name>
    <name type="ordered locus">RCAP_rcc03136</name>
</gene>